<name>FCNLN_BURCM</name>
<dbReference type="EC" id="3.1.1.120" evidence="1"/>
<dbReference type="EMBL" id="CP000440">
    <property type="protein sequence ID" value="ABI86782.1"/>
    <property type="molecule type" value="Genomic_DNA"/>
</dbReference>
<dbReference type="RefSeq" id="WP_011656547.1">
    <property type="nucleotide sequence ID" value="NC_008390.1"/>
</dbReference>
<dbReference type="SMR" id="Q0BGE1"/>
<dbReference type="GeneID" id="93083374"/>
<dbReference type="KEGG" id="bam:Bamb_1224"/>
<dbReference type="PATRIC" id="fig|339670.21.peg.332"/>
<dbReference type="eggNOG" id="COG3618">
    <property type="taxonomic scope" value="Bacteria"/>
</dbReference>
<dbReference type="Proteomes" id="UP000000662">
    <property type="component" value="Chromosome 1"/>
</dbReference>
<dbReference type="GO" id="GO:0016787">
    <property type="term" value="F:hydrolase activity"/>
    <property type="evidence" value="ECO:0007669"/>
    <property type="project" value="UniProtKB-KW"/>
</dbReference>
<dbReference type="Gene3D" id="3.20.20.140">
    <property type="entry name" value="Metal-dependent hydrolases"/>
    <property type="match status" value="1"/>
</dbReference>
<dbReference type="InterPro" id="IPR006680">
    <property type="entry name" value="Amidohydro-rel"/>
</dbReference>
<dbReference type="InterPro" id="IPR032466">
    <property type="entry name" value="Metal_Hydrolase"/>
</dbReference>
<dbReference type="InterPro" id="IPR052350">
    <property type="entry name" value="Metallo-dep_Lactonases"/>
</dbReference>
<dbReference type="PANTHER" id="PTHR43569">
    <property type="entry name" value="AMIDOHYDROLASE"/>
    <property type="match status" value="1"/>
</dbReference>
<dbReference type="PANTHER" id="PTHR43569:SF2">
    <property type="entry name" value="AMIDOHYDROLASE-RELATED DOMAIN-CONTAINING PROTEIN"/>
    <property type="match status" value="1"/>
</dbReference>
<dbReference type="Pfam" id="PF04909">
    <property type="entry name" value="Amidohydro_2"/>
    <property type="match status" value="1"/>
</dbReference>
<dbReference type="SUPFAM" id="SSF51556">
    <property type="entry name" value="Metallo-dependent hydrolases"/>
    <property type="match status" value="1"/>
</dbReference>
<feature type="chain" id="PRO_0000458158" description="L-fucono-1,5-lactonase">
    <location>
        <begin position="1"/>
        <end position="290"/>
    </location>
</feature>
<accession>Q0BGE1</accession>
<sequence length="290" mass="32570">MTFRIDAHQHFWQMASRDGYWPPQTLDAIYRDFGPQDLEPLLARSGVQRTVVVQSLPTQEDTRYLLDVASRTSFVAAVVGWVDLKSTDAPADIASLARDPKFRGIRPMLQDLADDDWIDDPVLEPAIDAMLAHDLAFDALVTPRHLPALLAFARRYPRLRIVIDHAAKPPIASGRSEAWHVAMSELAAHPNVHCKLSGLWTEAGPHPDLLRVEPYVRAVCDWFGASRLIWGSDWPVSRLAGHFGDYGAWLAWCEQCCDRFLGPDARARVFGGNACHFYRIDRPSGDQHAQ</sequence>
<organism>
    <name type="scientific">Burkholderia ambifaria (strain ATCC BAA-244 / DSM 16087 / CCUG 44356 / LMG 19182 / AMMD)</name>
    <name type="common">Burkholderia cepacia (strain AMMD)</name>
    <dbReference type="NCBI Taxonomy" id="339670"/>
    <lineage>
        <taxon>Bacteria</taxon>
        <taxon>Pseudomonadati</taxon>
        <taxon>Pseudomonadota</taxon>
        <taxon>Betaproteobacteria</taxon>
        <taxon>Burkholderiales</taxon>
        <taxon>Burkholderiaceae</taxon>
        <taxon>Burkholderia</taxon>
        <taxon>Burkholderia cepacia complex</taxon>
    </lineage>
</organism>
<evidence type="ECO:0000269" key="1">
    <source>
    </source>
</evidence>
<evidence type="ECO:0000303" key="2">
    <source>
    </source>
</evidence>
<evidence type="ECO:0000305" key="3"/>
<evidence type="ECO:0000305" key="4">
    <source>
    </source>
</evidence>
<evidence type="ECO:0000312" key="5">
    <source>
        <dbReference type="EMBL" id="ABI86782.1"/>
    </source>
</evidence>
<protein>
    <recommendedName>
        <fullName evidence="2">L-fucono-1,5-lactonase</fullName>
        <ecNumber evidence="1">3.1.1.120</ecNumber>
    </recommendedName>
    <alternativeName>
        <fullName evidence="2">Fuconolactonase</fullName>
    </alternativeName>
</protein>
<proteinExistence type="evidence at protein level"/>
<reference key="1">
    <citation type="submission" date="2006-08" db="EMBL/GenBank/DDBJ databases">
        <title>Complete sequence of chromosome 1 of Burkholderia cepacia AMMD.</title>
        <authorList>
            <person name="Copeland A."/>
            <person name="Lucas S."/>
            <person name="Lapidus A."/>
            <person name="Barry K."/>
            <person name="Detter J.C."/>
            <person name="Glavina del Rio T."/>
            <person name="Hammon N."/>
            <person name="Israni S."/>
            <person name="Pitluck S."/>
            <person name="Bruce D."/>
            <person name="Chain P."/>
            <person name="Malfatti S."/>
            <person name="Shin M."/>
            <person name="Vergez L."/>
            <person name="Schmutz J."/>
            <person name="Larimer F."/>
            <person name="Land M."/>
            <person name="Hauser L."/>
            <person name="Kyrpides N."/>
            <person name="Kim E."/>
            <person name="Parke J."/>
            <person name="Coenye T."/>
            <person name="Konstantinidis K."/>
            <person name="Ramette A."/>
            <person name="Tiedje J."/>
            <person name="Richardson P."/>
        </authorList>
    </citation>
    <scope>NUCLEOTIDE SEQUENCE [LARGE SCALE GENOMIC DNA]</scope>
    <source>
        <strain>ATCC BAA-244 / DSM 16087 / CCUG 44356 / LMG 19182 / AMMD</strain>
    </source>
</reference>
<reference key="2">
    <citation type="journal article" date="2013" name="Biochemistry">
        <title>Discovery of an L-fucono-1,5-lactonase from cog3618 of the amidohydrolase superfamily.</title>
        <authorList>
            <person name="Hobbs M.E."/>
            <person name="Vetting M."/>
            <person name="Williams H.J."/>
            <person name="Narindoshvili T."/>
            <person name="Kebodeaux D.M."/>
            <person name="Hillerich B."/>
            <person name="Seidel R.D."/>
            <person name="Almo S.C."/>
            <person name="Raushel F.M."/>
        </authorList>
    </citation>
    <scope>FUNCTION</scope>
    <scope>CATALYTIC ACTIVITY</scope>
    <scope>BIOPHYSICOCHEMICAL PROPERTIES</scope>
    <source>
        <strain>ATCC BAA-244 / DSM 16087 / CCUG 44356 / LMG 19182 / AMMD</strain>
    </source>
</reference>
<keyword id="KW-0119">Carbohydrate metabolism</keyword>
<keyword id="KW-0378">Hydrolase</keyword>
<comment type="function">
    <text evidence="1">Catalyzes the hydrolysis of L-fucono-1,5-lactone to L-fuconate (PubMed:23214453). Can also hydrolyze L-fucono-1,4-lactone, L-galactono-1,4-lactone D-arabinono-1,4-lactone and L-xylono-1,4-lactone (PubMed:23214453).</text>
</comment>
<comment type="catalytic activity">
    <reaction evidence="4">
        <text>L-fucono-1,5-lactone + H2O = L-fuconate + H(+)</text>
        <dbReference type="Rhea" id="RHEA:75219"/>
        <dbReference type="ChEBI" id="CHEBI:15377"/>
        <dbReference type="ChEBI" id="CHEBI:15378"/>
        <dbReference type="ChEBI" id="CHEBI:21291"/>
        <dbReference type="ChEBI" id="CHEBI:81457"/>
        <dbReference type="EC" id="3.1.1.120"/>
    </reaction>
</comment>
<comment type="catalytic activity">
    <reaction evidence="1">
        <text>L-fucono-1,4-lactone + H2O = L-fuconate + H(+)</text>
        <dbReference type="Rhea" id="RHEA:75223"/>
        <dbReference type="ChEBI" id="CHEBI:15377"/>
        <dbReference type="ChEBI" id="CHEBI:15378"/>
        <dbReference type="ChEBI" id="CHEBI:21291"/>
        <dbReference type="ChEBI" id="CHEBI:189082"/>
        <dbReference type="EC" id="3.1.1.120"/>
    </reaction>
</comment>
<comment type="catalytic activity">
    <reaction evidence="1">
        <text>D-arabinono-1,4-lactone + H2O = D-arabinonate + H(+)</text>
        <dbReference type="Rhea" id="RHEA:23108"/>
        <dbReference type="ChEBI" id="CHEBI:15377"/>
        <dbReference type="ChEBI" id="CHEBI:15378"/>
        <dbReference type="ChEBI" id="CHEBI:16157"/>
        <dbReference type="ChEBI" id="CHEBI:16292"/>
        <dbReference type="EC" id="3.1.1.120"/>
    </reaction>
</comment>
<comment type="catalytic activity">
    <reaction evidence="1">
        <text>L-xylono-1,4-lactone + H2O = L-xylonate + H(+)</text>
        <dbReference type="Rhea" id="RHEA:75227"/>
        <dbReference type="ChEBI" id="CHEBI:15377"/>
        <dbReference type="ChEBI" id="CHEBI:15378"/>
        <dbReference type="ChEBI" id="CHEBI:18118"/>
        <dbReference type="ChEBI" id="CHEBI:28146"/>
        <dbReference type="EC" id="3.1.1.120"/>
    </reaction>
</comment>
<comment type="catalytic activity">
    <reaction evidence="1">
        <text>L-galactono-1,4-lactone + H2O = L-galactonate + H(+)</text>
        <dbReference type="Rhea" id="RHEA:75231"/>
        <dbReference type="ChEBI" id="CHEBI:15377"/>
        <dbReference type="ChEBI" id="CHEBI:15378"/>
        <dbReference type="ChEBI" id="CHEBI:17464"/>
        <dbReference type="ChEBI" id="CHEBI:53071"/>
        <dbReference type="EC" id="3.1.1.120"/>
    </reaction>
</comment>
<comment type="biophysicochemical properties">
    <kinetics>
        <KM evidence="1">0.9 mM for L-fucono-1,4-lactone (at pH 8.3 and pH 7.1)</KM>
        <KM evidence="1">1.3 mM for L-galactono-1,4-lactone (at pH 8.3)</KM>
        <KM evidence="1">0.5 mM for L-galactono-1,4-lactone (at pH 7.1)</KM>
        <KM evidence="1">0.8 mM for D-arabinono-1,4-lactone (at pH 8.3)</KM>
        <KM evidence="1">0.7 mM for D-arabinono-1,4-lactone (at pH 7.1)</KM>
        <KM evidence="1">1.3 mM for L-xylono-1,4-lactone (at pH 8.3)</KM>
        <KM evidence="1">0.21 mM for 4-deoxy-L-fucono-1,5-lactone (at pH 7.1)</KM>
        <text evidence="1">kcat is 89 sec(-1) with L-fucono-1,4-lactone as substrate (at pH 8.3). kcat is 4.1 sec(-1) with L-fucono-1,4-lactone as substrate (at pH 7.1). kcat is 55 sec(-1) with L-galactono-1,4-lactone as substrate (at pH 8.3). kcat is 6.2 sec(-1) with L-galactono-1,4-lactone as substrate (at pH 7.1). kcat is 19 sec(-1) with D-arabinono-1,4-lactone as substrate (at pH 8.3). kcat is 2.2 sec(-1) with D-arabinono-1,4-lactone as substrate (at pH 7.1). kcat is 6.0 sec(-1) with L-xylono-1,4-lactone as substrate (at pH 8.3). kcat is 1530 sec(-1) with 4-deoxy-L-fucono-1,5-lactone as substrate (at pH 7.1).</text>
    </kinetics>
</comment>
<comment type="miscellaneous">
    <text evidence="1">It was not possible to determine the kinetic constants for the hydrolysis of L-fucono-1,5-lactone because of chemical instability, and thus, a stable mimic (4-deoxy-L-fucono-1,5-lactone) was utilized.</text>
</comment>
<comment type="similarity">
    <text evidence="3">Belongs to the metallo-dependent hydrolases superfamily.</text>
</comment>
<gene>
    <name evidence="5" type="ordered locus">Bamb_1224</name>
</gene>